<sequence>MAERKYFGTDGVRGLVGQAPITPDFVMKLGWAAGQVLAKQGTKKVIIGKDTRISGYMLESALEAGLAAAGLQAKFTGPMPTPAVAYLTQTFRAEAGIVISASHNPYYDNGIKFFSSEGTKLPDDVEMAIEAELDKPMTCVESALLGKASRLNDAAGRYIEFCKSTFPKELSLAGLKIVIDCANGATYHIAPNVFKELGAEIITIGCEPNGTNINHEVGATDVRALQAKVVEEKADFGVAFDGDGDRIIMVDEFGEKVDGDQIAYIIARDALRRGELKGGVVGTLMTNMGMEVALRNLGIPFVRSDVGDRYVMEKLLENNWLIGAENSGHVILLDKVTTGDAIVAALQVIASIVGSKMSLKELCDGMTMFPQILVNVRFAGENDPLESDAVKAAQADVEAKLGDNGRVLLRKSGTEPLIRVMVEGEDAELVTQYAQQIADAVKESC</sequence>
<organism>
    <name type="scientific">Aliivibrio fischeri (strain ATCC 700601 / ES114)</name>
    <name type="common">Vibrio fischeri</name>
    <dbReference type="NCBI Taxonomy" id="312309"/>
    <lineage>
        <taxon>Bacteria</taxon>
        <taxon>Pseudomonadati</taxon>
        <taxon>Pseudomonadota</taxon>
        <taxon>Gammaproteobacteria</taxon>
        <taxon>Vibrionales</taxon>
        <taxon>Vibrionaceae</taxon>
        <taxon>Aliivibrio</taxon>
    </lineage>
</organism>
<evidence type="ECO:0000255" key="1">
    <source>
        <dbReference type="HAMAP-Rule" id="MF_01554"/>
    </source>
</evidence>
<comment type="function">
    <text evidence="1">Catalyzes the conversion of glucosamine-6-phosphate to glucosamine-1-phosphate.</text>
</comment>
<comment type="catalytic activity">
    <reaction evidence="1">
        <text>alpha-D-glucosamine 1-phosphate = D-glucosamine 6-phosphate</text>
        <dbReference type="Rhea" id="RHEA:23424"/>
        <dbReference type="ChEBI" id="CHEBI:58516"/>
        <dbReference type="ChEBI" id="CHEBI:58725"/>
        <dbReference type="EC" id="5.4.2.10"/>
    </reaction>
</comment>
<comment type="cofactor">
    <cofactor evidence="1">
        <name>Mg(2+)</name>
        <dbReference type="ChEBI" id="CHEBI:18420"/>
    </cofactor>
    <text evidence="1">Binds 1 Mg(2+) ion per subunit.</text>
</comment>
<comment type="PTM">
    <text evidence="1">Activated by phosphorylation.</text>
</comment>
<comment type="similarity">
    <text evidence="1">Belongs to the phosphohexose mutase family.</text>
</comment>
<dbReference type="EC" id="5.4.2.10" evidence="1"/>
<dbReference type="EMBL" id="CP000020">
    <property type="protein sequence ID" value="AAW84976.2"/>
    <property type="molecule type" value="Genomic_DNA"/>
</dbReference>
<dbReference type="RefSeq" id="WP_011261255.1">
    <property type="nucleotide sequence ID" value="NC_006840.2"/>
</dbReference>
<dbReference type="RefSeq" id="YP_203864.2">
    <property type="nucleotide sequence ID" value="NC_006840.2"/>
</dbReference>
<dbReference type="SMR" id="Q5E7M0"/>
<dbReference type="STRING" id="312309.VF_0481"/>
<dbReference type="EnsemblBacteria" id="AAW84976">
    <property type="protein sequence ID" value="AAW84976"/>
    <property type="gene ID" value="VF_0481"/>
</dbReference>
<dbReference type="GeneID" id="54163117"/>
<dbReference type="KEGG" id="vfi:VF_0481"/>
<dbReference type="PATRIC" id="fig|312309.11.peg.472"/>
<dbReference type="eggNOG" id="COG1109">
    <property type="taxonomic scope" value="Bacteria"/>
</dbReference>
<dbReference type="HOGENOM" id="CLU_016950_7_0_6"/>
<dbReference type="OrthoDB" id="9803322at2"/>
<dbReference type="Proteomes" id="UP000000537">
    <property type="component" value="Chromosome I"/>
</dbReference>
<dbReference type="GO" id="GO:0005829">
    <property type="term" value="C:cytosol"/>
    <property type="evidence" value="ECO:0007669"/>
    <property type="project" value="TreeGrafter"/>
</dbReference>
<dbReference type="GO" id="GO:0000287">
    <property type="term" value="F:magnesium ion binding"/>
    <property type="evidence" value="ECO:0007669"/>
    <property type="project" value="UniProtKB-UniRule"/>
</dbReference>
<dbReference type="GO" id="GO:0008966">
    <property type="term" value="F:phosphoglucosamine mutase activity"/>
    <property type="evidence" value="ECO:0007669"/>
    <property type="project" value="UniProtKB-UniRule"/>
</dbReference>
<dbReference type="GO" id="GO:0004615">
    <property type="term" value="F:phosphomannomutase activity"/>
    <property type="evidence" value="ECO:0007669"/>
    <property type="project" value="TreeGrafter"/>
</dbReference>
<dbReference type="GO" id="GO:0005975">
    <property type="term" value="P:carbohydrate metabolic process"/>
    <property type="evidence" value="ECO:0007669"/>
    <property type="project" value="InterPro"/>
</dbReference>
<dbReference type="GO" id="GO:0009252">
    <property type="term" value="P:peptidoglycan biosynthetic process"/>
    <property type="evidence" value="ECO:0007669"/>
    <property type="project" value="TreeGrafter"/>
</dbReference>
<dbReference type="GO" id="GO:0006048">
    <property type="term" value="P:UDP-N-acetylglucosamine biosynthetic process"/>
    <property type="evidence" value="ECO:0007669"/>
    <property type="project" value="TreeGrafter"/>
</dbReference>
<dbReference type="CDD" id="cd05802">
    <property type="entry name" value="GlmM"/>
    <property type="match status" value="1"/>
</dbReference>
<dbReference type="FunFam" id="3.30.310.50:FF:000001">
    <property type="entry name" value="Phosphoglucosamine mutase"/>
    <property type="match status" value="1"/>
</dbReference>
<dbReference type="FunFam" id="3.40.120.10:FF:000001">
    <property type="entry name" value="Phosphoglucosamine mutase"/>
    <property type="match status" value="1"/>
</dbReference>
<dbReference type="FunFam" id="3.40.120.10:FF:000003">
    <property type="entry name" value="Phosphoglucosamine mutase"/>
    <property type="match status" value="1"/>
</dbReference>
<dbReference type="Gene3D" id="3.40.120.10">
    <property type="entry name" value="Alpha-D-Glucose-1,6-Bisphosphate, subunit A, domain 3"/>
    <property type="match status" value="3"/>
</dbReference>
<dbReference type="Gene3D" id="3.30.310.50">
    <property type="entry name" value="Alpha-D-phosphohexomutase, C-terminal domain"/>
    <property type="match status" value="1"/>
</dbReference>
<dbReference type="HAMAP" id="MF_01554_B">
    <property type="entry name" value="GlmM_B"/>
    <property type="match status" value="1"/>
</dbReference>
<dbReference type="InterPro" id="IPR005844">
    <property type="entry name" value="A-D-PHexomutase_a/b/a-I"/>
</dbReference>
<dbReference type="InterPro" id="IPR016055">
    <property type="entry name" value="A-D-PHexomutase_a/b/a-I/II/III"/>
</dbReference>
<dbReference type="InterPro" id="IPR005845">
    <property type="entry name" value="A-D-PHexomutase_a/b/a-II"/>
</dbReference>
<dbReference type="InterPro" id="IPR005846">
    <property type="entry name" value="A-D-PHexomutase_a/b/a-III"/>
</dbReference>
<dbReference type="InterPro" id="IPR005843">
    <property type="entry name" value="A-D-PHexomutase_C"/>
</dbReference>
<dbReference type="InterPro" id="IPR036900">
    <property type="entry name" value="A-D-PHexomutase_C_sf"/>
</dbReference>
<dbReference type="InterPro" id="IPR016066">
    <property type="entry name" value="A-D-PHexomutase_CS"/>
</dbReference>
<dbReference type="InterPro" id="IPR005841">
    <property type="entry name" value="Alpha-D-phosphohexomutase_SF"/>
</dbReference>
<dbReference type="InterPro" id="IPR006352">
    <property type="entry name" value="GlmM_bact"/>
</dbReference>
<dbReference type="InterPro" id="IPR050060">
    <property type="entry name" value="Phosphoglucosamine_mutase"/>
</dbReference>
<dbReference type="NCBIfam" id="TIGR01455">
    <property type="entry name" value="glmM"/>
    <property type="match status" value="1"/>
</dbReference>
<dbReference type="NCBIfam" id="NF008139">
    <property type="entry name" value="PRK10887.1"/>
    <property type="match status" value="1"/>
</dbReference>
<dbReference type="PANTHER" id="PTHR42946:SF1">
    <property type="entry name" value="PHOSPHOGLUCOMUTASE (ALPHA-D-GLUCOSE-1,6-BISPHOSPHATE-DEPENDENT)"/>
    <property type="match status" value="1"/>
</dbReference>
<dbReference type="PANTHER" id="PTHR42946">
    <property type="entry name" value="PHOSPHOHEXOSE MUTASE"/>
    <property type="match status" value="1"/>
</dbReference>
<dbReference type="Pfam" id="PF02878">
    <property type="entry name" value="PGM_PMM_I"/>
    <property type="match status" value="1"/>
</dbReference>
<dbReference type="Pfam" id="PF02879">
    <property type="entry name" value="PGM_PMM_II"/>
    <property type="match status" value="1"/>
</dbReference>
<dbReference type="Pfam" id="PF02880">
    <property type="entry name" value="PGM_PMM_III"/>
    <property type="match status" value="1"/>
</dbReference>
<dbReference type="Pfam" id="PF00408">
    <property type="entry name" value="PGM_PMM_IV"/>
    <property type="match status" value="1"/>
</dbReference>
<dbReference type="PRINTS" id="PR00509">
    <property type="entry name" value="PGMPMM"/>
</dbReference>
<dbReference type="SUPFAM" id="SSF55957">
    <property type="entry name" value="Phosphoglucomutase, C-terminal domain"/>
    <property type="match status" value="1"/>
</dbReference>
<dbReference type="SUPFAM" id="SSF53738">
    <property type="entry name" value="Phosphoglucomutase, first 3 domains"/>
    <property type="match status" value="3"/>
</dbReference>
<dbReference type="PROSITE" id="PS00710">
    <property type="entry name" value="PGM_PMM"/>
    <property type="match status" value="1"/>
</dbReference>
<reference key="1">
    <citation type="journal article" date="2005" name="Proc. Natl. Acad. Sci. U.S.A.">
        <title>Complete genome sequence of Vibrio fischeri: a symbiotic bacterium with pathogenic congeners.</title>
        <authorList>
            <person name="Ruby E.G."/>
            <person name="Urbanowski M."/>
            <person name="Campbell J."/>
            <person name="Dunn A."/>
            <person name="Faini M."/>
            <person name="Gunsalus R."/>
            <person name="Lostroh P."/>
            <person name="Lupp C."/>
            <person name="McCann J."/>
            <person name="Millikan D."/>
            <person name="Schaefer A."/>
            <person name="Stabb E."/>
            <person name="Stevens A."/>
            <person name="Visick K."/>
            <person name="Whistler C."/>
            <person name="Greenberg E.P."/>
        </authorList>
    </citation>
    <scope>NUCLEOTIDE SEQUENCE [LARGE SCALE GENOMIC DNA]</scope>
    <source>
        <strain>ATCC 700601 / ES114</strain>
    </source>
</reference>
<reference key="2">
    <citation type="journal article" date="2008" name="BMC Genomics">
        <title>Comparative genomics-based investigation of resequencing targets in Vibrio fischeri: focus on point miscalls and artefactual expansions.</title>
        <authorList>
            <person name="Mandel M.J."/>
            <person name="Stabb E.V."/>
            <person name="Ruby E.G."/>
        </authorList>
    </citation>
    <scope>SEQUENCE REVISION</scope>
</reference>
<keyword id="KW-0413">Isomerase</keyword>
<keyword id="KW-0460">Magnesium</keyword>
<keyword id="KW-0479">Metal-binding</keyword>
<keyword id="KW-0597">Phosphoprotein</keyword>
<keyword id="KW-1185">Reference proteome</keyword>
<name>GLMM_ALIF1</name>
<accession>Q5E7M0</accession>
<gene>
    <name evidence="1" type="primary">glmM</name>
    <name type="ordered locus">VF_0481</name>
    <name type="ORF">VF0482</name>
</gene>
<proteinExistence type="inferred from homology"/>
<protein>
    <recommendedName>
        <fullName evidence="1">Phosphoglucosamine mutase</fullName>
        <ecNumber evidence="1">5.4.2.10</ecNumber>
    </recommendedName>
</protein>
<feature type="chain" id="PRO_0000147997" description="Phosphoglucosamine mutase">
    <location>
        <begin position="1"/>
        <end position="445"/>
    </location>
</feature>
<feature type="active site" description="Phosphoserine intermediate" evidence="1">
    <location>
        <position position="102"/>
    </location>
</feature>
<feature type="binding site" description="via phosphate group" evidence="1">
    <location>
        <position position="102"/>
    </location>
    <ligand>
        <name>Mg(2+)</name>
        <dbReference type="ChEBI" id="CHEBI:18420"/>
    </ligand>
</feature>
<feature type="binding site" evidence="1">
    <location>
        <position position="241"/>
    </location>
    <ligand>
        <name>Mg(2+)</name>
        <dbReference type="ChEBI" id="CHEBI:18420"/>
    </ligand>
</feature>
<feature type="binding site" evidence="1">
    <location>
        <position position="243"/>
    </location>
    <ligand>
        <name>Mg(2+)</name>
        <dbReference type="ChEBI" id="CHEBI:18420"/>
    </ligand>
</feature>
<feature type="binding site" evidence="1">
    <location>
        <position position="245"/>
    </location>
    <ligand>
        <name>Mg(2+)</name>
        <dbReference type="ChEBI" id="CHEBI:18420"/>
    </ligand>
</feature>
<feature type="modified residue" description="Phosphoserine" evidence="1">
    <location>
        <position position="102"/>
    </location>
</feature>